<name>NUSB_RICBR</name>
<gene>
    <name evidence="1" type="primary">nusB</name>
    <name type="ordered locus">RBE_1119</name>
</gene>
<protein>
    <recommendedName>
        <fullName evidence="1">Transcription antitermination protein NusB</fullName>
    </recommendedName>
    <alternativeName>
        <fullName evidence="1">Antitermination factor NusB</fullName>
    </alternativeName>
</protein>
<reference key="1">
    <citation type="journal article" date="2006" name="PLoS Genet.">
        <title>Genome sequence of Rickettsia bellii illuminates the role of amoebae in gene exchanges between intracellular pathogens.</title>
        <authorList>
            <person name="Ogata H."/>
            <person name="La Scola B."/>
            <person name="Audic S."/>
            <person name="Renesto P."/>
            <person name="Blanc G."/>
            <person name="Robert C."/>
            <person name="Fournier P.-E."/>
            <person name="Claverie J.-M."/>
            <person name="Raoult D."/>
        </authorList>
    </citation>
    <scope>NUCLEOTIDE SEQUENCE [LARGE SCALE GENOMIC DNA]</scope>
    <source>
        <strain>RML369-C</strain>
    </source>
</reference>
<sequence>MSSNKINKKSIARIAAIQAIYQHMLRNNDNIDDIIENVLSFYRNDTSMTDSPIKISLTISHFKMLVKLVFENIDKIDEIISNHLVNDKNQNHIPILLQALLRSGICELLFFPDIPTKVIINEYTDIANDMLNDHEIGFVNSILDKIAHENKRFYDK</sequence>
<dbReference type="EMBL" id="CP000087">
    <property type="protein sequence ID" value="ABE05200.1"/>
    <property type="molecule type" value="Genomic_DNA"/>
</dbReference>
<dbReference type="RefSeq" id="WP_011477778.1">
    <property type="nucleotide sequence ID" value="NC_007940.1"/>
</dbReference>
<dbReference type="SMR" id="Q1RHG4"/>
<dbReference type="KEGG" id="rbe:RBE_1119"/>
<dbReference type="eggNOG" id="COG0781">
    <property type="taxonomic scope" value="Bacteria"/>
</dbReference>
<dbReference type="HOGENOM" id="CLU_087843_4_3_5"/>
<dbReference type="OrthoDB" id="9797817at2"/>
<dbReference type="Proteomes" id="UP000001951">
    <property type="component" value="Chromosome"/>
</dbReference>
<dbReference type="GO" id="GO:0005829">
    <property type="term" value="C:cytosol"/>
    <property type="evidence" value="ECO:0007669"/>
    <property type="project" value="TreeGrafter"/>
</dbReference>
<dbReference type="GO" id="GO:0003723">
    <property type="term" value="F:RNA binding"/>
    <property type="evidence" value="ECO:0007669"/>
    <property type="project" value="UniProtKB-UniRule"/>
</dbReference>
<dbReference type="GO" id="GO:0006353">
    <property type="term" value="P:DNA-templated transcription termination"/>
    <property type="evidence" value="ECO:0007669"/>
    <property type="project" value="UniProtKB-UniRule"/>
</dbReference>
<dbReference type="GO" id="GO:0031564">
    <property type="term" value="P:transcription antitermination"/>
    <property type="evidence" value="ECO:0007669"/>
    <property type="project" value="UniProtKB-KW"/>
</dbReference>
<dbReference type="Gene3D" id="1.10.940.10">
    <property type="entry name" value="NusB-like"/>
    <property type="match status" value="1"/>
</dbReference>
<dbReference type="HAMAP" id="MF_00073">
    <property type="entry name" value="NusB"/>
    <property type="match status" value="1"/>
</dbReference>
<dbReference type="InterPro" id="IPR035926">
    <property type="entry name" value="NusB-like_sf"/>
</dbReference>
<dbReference type="InterPro" id="IPR011605">
    <property type="entry name" value="NusB_fam"/>
</dbReference>
<dbReference type="InterPro" id="IPR006027">
    <property type="entry name" value="NusB_RsmB_TIM44"/>
</dbReference>
<dbReference type="NCBIfam" id="TIGR01951">
    <property type="entry name" value="nusB"/>
    <property type="match status" value="1"/>
</dbReference>
<dbReference type="PANTHER" id="PTHR11078:SF3">
    <property type="entry name" value="ANTITERMINATION NUSB DOMAIN-CONTAINING PROTEIN"/>
    <property type="match status" value="1"/>
</dbReference>
<dbReference type="PANTHER" id="PTHR11078">
    <property type="entry name" value="N UTILIZATION SUBSTANCE PROTEIN B-RELATED"/>
    <property type="match status" value="1"/>
</dbReference>
<dbReference type="Pfam" id="PF01029">
    <property type="entry name" value="NusB"/>
    <property type="match status" value="1"/>
</dbReference>
<dbReference type="SUPFAM" id="SSF48013">
    <property type="entry name" value="NusB-like"/>
    <property type="match status" value="1"/>
</dbReference>
<evidence type="ECO:0000255" key="1">
    <source>
        <dbReference type="HAMAP-Rule" id="MF_00073"/>
    </source>
</evidence>
<proteinExistence type="inferred from homology"/>
<accession>Q1RHG4</accession>
<keyword id="KW-0694">RNA-binding</keyword>
<keyword id="KW-0804">Transcription</keyword>
<keyword id="KW-0889">Transcription antitermination</keyword>
<keyword id="KW-0805">Transcription regulation</keyword>
<comment type="function">
    <text evidence="1">Involved in transcription antitermination. Required for transcription of ribosomal RNA (rRNA) genes. Binds specifically to the boxA antiterminator sequence of the ribosomal RNA (rrn) operons.</text>
</comment>
<comment type="similarity">
    <text evidence="1">Belongs to the NusB family.</text>
</comment>
<feature type="chain" id="PRO_0000265580" description="Transcription antitermination protein NusB">
    <location>
        <begin position="1"/>
        <end position="156"/>
    </location>
</feature>
<organism>
    <name type="scientific">Rickettsia bellii (strain RML369-C)</name>
    <dbReference type="NCBI Taxonomy" id="336407"/>
    <lineage>
        <taxon>Bacteria</taxon>
        <taxon>Pseudomonadati</taxon>
        <taxon>Pseudomonadota</taxon>
        <taxon>Alphaproteobacteria</taxon>
        <taxon>Rickettsiales</taxon>
        <taxon>Rickettsiaceae</taxon>
        <taxon>Rickettsieae</taxon>
        <taxon>Rickettsia</taxon>
        <taxon>belli group</taxon>
    </lineage>
</organism>